<protein>
    <recommendedName>
        <fullName>S-adenosylmethionine synthase 2</fullName>
        <shortName>AdoMet synthase 2</shortName>
        <ecNumber evidence="7">2.5.1.6</ecNumber>
    </recommendedName>
    <alternativeName>
        <fullName>Methionine adenosyltransferase 2</fullName>
        <shortName>MAT 2</shortName>
    </alternativeName>
</protein>
<gene>
    <name type="primary">SAM2</name>
    <name type="ordered locus">At4g01850</name>
    <name type="ORF">T7B11.11</name>
</gene>
<reference key="1">
    <citation type="journal article" date="1989" name="Gene">
        <title>Structure and expression analyses of the S-adenosylmethionine synthetase gene family in Arabidopsis thaliana.</title>
        <authorList>
            <person name="Peleman J."/>
            <person name="Saito K."/>
            <person name="Cottyn B."/>
            <person name="Engler G."/>
            <person name="Seurinck J."/>
            <person name="van Montagu M."/>
            <person name="Inze D."/>
        </authorList>
    </citation>
    <scope>NUCLEOTIDE SEQUENCE [GENOMIC DNA]</scope>
    <scope>TISSUE SPECIFICITY</scope>
    <source>
        <strain>cv. Columbia</strain>
    </source>
</reference>
<reference key="2">
    <citation type="journal article" date="1999" name="Nature">
        <title>Sequence and analysis of chromosome 4 of the plant Arabidopsis thaliana.</title>
        <authorList>
            <person name="Mayer K.F.X."/>
            <person name="Schueller C."/>
            <person name="Wambutt R."/>
            <person name="Murphy G."/>
            <person name="Volckaert G."/>
            <person name="Pohl T."/>
            <person name="Duesterhoeft A."/>
            <person name="Stiekema W."/>
            <person name="Entian K.-D."/>
            <person name="Terryn N."/>
            <person name="Harris B."/>
            <person name="Ansorge W."/>
            <person name="Brandt P."/>
            <person name="Grivell L.A."/>
            <person name="Rieger M."/>
            <person name="Weichselgartner M."/>
            <person name="de Simone V."/>
            <person name="Obermaier B."/>
            <person name="Mache R."/>
            <person name="Mueller M."/>
            <person name="Kreis M."/>
            <person name="Delseny M."/>
            <person name="Puigdomenech P."/>
            <person name="Watson M."/>
            <person name="Schmidtheini T."/>
            <person name="Reichert B."/>
            <person name="Portetelle D."/>
            <person name="Perez-Alonso M."/>
            <person name="Boutry M."/>
            <person name="Bancroft I."/>
            <person name="Vos P."/>
            <person name="Hoheisel J."/>
            <person name="Zimmermann W."/>
            <person name="Wedler H."/>
            <person name="Ridley P."/>
            <person name="Langham S.-A."/>
            <person name="McCullagh B."/>
            <person name="Bilham L."/>
            <person name="Robben J."/>
            <person name="van der Schueren J."/>
            <person name="Grymonprez B."/>
            <person name="Chuang Y.-J."/>
            <person name="Vandenbussche F."/>
            <person name="Braeken M."/>
            <person name="Weltjens I."/>
            <person name="Voet M."/>
            <person name="Bastiaens I."/>
            <person name="Aert R."/>
            <person name="Defoor E."/>
            <person name="Weitzenegger T."/>
            <person name="Bothe G."/>
            <person name="Ramsperger U."/>
            <person name="Hilbert H."/>
            <person name="Braun M."/>
            <person name="Holzer E."/>
            <person name="Brandt A."/>
            <person name="Peters S."/>
            <person name="van Staveren M."/>
            <person name="Dirkse W."/>
            <person name="Mooijman P."/>
            <person name="Klein Lankhorst R."/>
            <person name="Rose M."/>
            <person name="Hauf J."/>
            <person name="Koetter P."/>
            <person name="Berneiser S."/>
            <person name="Hempel S."/>
            <person name="Feldpausch M."/>
            <person name="Lamberth S."/>
            <person name="Van den Daele H."/>
            <person name="De Keyser A."/>
            <person name="Buysshaert C."/>
            <person name="Gielen J."/>
            <person name="Villarroel R."/>
            <person name="De Clercq R."/>
            <person name="van Montagu M."/>
            <person name="Rogers J."/>
            <person name="Cronin A."/>
            <person name="Quail M.A."/>
            <person name="Bray-Allen S."/>
            <person name="Clark L."/>
            <person name="Doggett J."/>
            <person name="Hall S."/>
            <person name="Kay M."/>
            <person name="Lennard N."/>
            <person name="McLay K."/>
            <person name="Mayes R."/>
            <person name="Pettett A."/>
            <person name="Rajandream M.A."/>
            <person name="Lyne M."/>
            <person name="Benes V."/>
            <person name="Rechmann S."/>
            <person name="Borkova D."/>
            <person name="Bloecker H."/>
            <person name="Scharfe M."/>
            <person name="Grimm M."/>
            <person name="Loehnert T.-H."/>
            <person name="Dose S."/>
            <person name="de Haan M."/>
            <person name="Maarse A.C."/>
            <person name="Schaefer M."/>
            <person name="Mueller-Auer S."/>
            <person name="Gabel C."/>
            <person name="Fuchs M."/>
            <person name="Fartmann B."/>
            <person name="Granderath K."/>
            <person name="Dauner D."/>
            <person name="Herzl A."/>
            <person name="Neumann S."/>
            <person name="Argiriou A."/>
            <person name="Vitale D."/>
            <person name="Liguori R."/>
            <person name="Piravandi E."/>
            <person name="Massenet O."/>
            <person name="Quigley F."/>
            <person name="Clabauld G."/>
            <person name="Muendlein A."/>
            <person name="Felber R."/>
            <person name="Schnabl S."/>
            <person name="Hiller R."/>
            <person name="Schmidt W."/>
            <person name="Lecharny A."/>
            <person name="Aubourg S."/>
            <person name="Chefdor F."/>
            <person name="Cooke R."/>
            <person name="Berger C."/>
            <person name="Monfort A."/>
            <person name="Casacuberta E."/>
            <person name="Gibbons T."/>
            <person name="Weber N."/>
            <person name="Vandenbol M."/>
            <person name="Bargues M."/>
            <person name="Terol J."/>
            <person name="Torres A."/>
            <person name="Perez-Perez A."/>
            <person name="Purnelle B."/>
            <person name="Bent E."/>
            <person name="Johnson S."/>
            <person name="Tacon D."/>
            <person name="Jesse T."/>
            <person name="Heijnen L."/>
            <person name="Schwarz S."/>
            <person name="Scholler P."/>
            <person name="Heber S."/>
            <person name="Francs P."/>
            <person name="Bielke C."/>
            <person name="Frishman D."/>
            <person name="Haase D."/>
            <person name="Lemcke K."/>
            <person name="Mewes H.-W."/>
            <person name="Stocker S."/>
            <person name="Zaccaria P."/>
            <person name="Bevan M."/>
            <person name="Wilson R.K."/>
            <person name="de la Bastide M."/>
            <person name="Habermann K."/>
            <person name="Parnell L."/>
            <person name="Dedhia N."/>
            <person name="Gnoj L."/>
            <person name="Schutz K."/>
            <person name="Huang E."/>
            <person name="Spiegel L."/>
            <person name="Sekhon M."/>
            <person name="Murray J."/>
            <person name="Sheet P."/>
            <person name="Cordes M."/>
            <person name="Abu-Threideh J."/>
            <person name="Stoneking T."/>
            <person name="Kalicki J."/>
            <person name="Graves T."/>
            <person name="Harmon G."/>
            <person name="Edwards J."/>
            <person name="Latreille P."/>
            <person name="Courtney L."/>
            <person name="Cloud J."/>
            <person name="Abbott A."/>
            <person name="Scott K."/>
            <person name="Johnson D."/>
            <person name="Minx P."/>
            <person name="Bentley D."/>
            <person name="Fulton B."/>
            <person name="Miller N."/>
            <person name="Greco T."/>
            <person name="Kemp K."/>
            <person name="Kramer J."/>
            <person name="Fulton L."/>
            <person name="Mardis E."/>
            <person name="Dante M."/>
            <person name="Pepin K."/>
            <person name="Hillier L.W."/>
            <person name="Nelson J."/>
            <person name="Spieth J."/>
            <person name="Ryan E."/>
            <person name="Andrews S."/>
            <person name="Geisel C."/>
            <person name="Layman D."/>
            <person name="Du H."/>
            <person name="Ali J."/>
            <person name="Berghoff A."/>
            <person name="Jones K."/>
            <person name="Drone K."/>
            <person name="Cotton M."/>
            <person name="Joshu C."/>
            <person name="Antonoiu B."/>
            <person name="Zidanic M."/>
            <person name="Strong C."/>
            <person name="Sun H."/>
            <person name="Lamar B."/>
            <person name="Yordan C."/>
            <person name="Ma P."/>
            <person name="Zhong J."/>
            <person name="Preston R."/>
            <person name="Vil D."/>
            <person name="Shekher M."/>
            <person name="Matero A."/>
            <person name="Shah R."/>
            <person name="Swaby I.K."/>
            <person name="O'Shaughnessy A."/>
            <person name="Rodriguez M."/>
            <person name="Hoffman J."/>
            <person name="Till S."/>
            <person name="Granat S."/>
            <person name="Shohdy N."/>
            <person name="Hasegawa A."/>
            <person name="Hameed A."/>
            <person name="Lodhi M."/>
            <person name="Johnson A."/>
            <person name="Chen E."/>
            <person name="Marra M.A."/>
            <person name="Martienssen R."/>
            <person name="McCombie W.R."/>
        </authorList>
    </citation>
    <scope>NUCLEOTIDE SEQUENCE [LARGE SCALE GENOMIC DNA]</scope>
    <source>
        <strain>cv. Columbia</strain>
    </source>
</reference>
<reference key="3">
    <citation type="journal article" date="2017" name="Plant J.">
        <title>Araport11: a complete reannotation of the Arabidopsis thaliana reference genome.</title>
        <authorList>
            <person name="Cheng C.Y."/>
            <person name="Krishnakumar V."/>
            <person name="Chan A.P."/>
            <person name="Thibaud-Nissen F."/>
            <person name="Schobel S."/>
            <person name="Town C.D."/>
        </authorList>
    </citation>
    <scope>GENOME REANNOTATION</scope>
    <source>
        <strain>cv. Columbia</strain>
    </source>
</reference>
<reference key="4">
    <citation type="journal article" date="2003" name="Science">
        <title>Empirical analysis of transcriptional activity in the Arabidopsis genome.</title>
        <authorList>
            <person name="Yamada K."/>
            <person name="Lim J."/>
            <person name="Dale J.M."/>
            <person name="Chen H."/>
            <person name="Shinn P."/>
            <person name="Palm C.J."/>
            <person name="Southwick A.M."/>
            <person name="Wu H.C."/>
            <person name="Kim C.J."/>
            <person name="Nguyen M."/>
            <person name="Pham P.K."/>
            <person name="Cheuk R.F."/>
            <person name="Karlin-Newmann G."/>
            <person name="Liu S.X."/>
            <person name="Lam B."/>
            <person name="Sakano H."/>
            <person name="Wu T."/>
            <person name="Yu G."/>
            <person name="Miranda M."/>
            <person name="Quach H.L."/>
            <person name="Tripp M."/>
            <person name="Chang C.H."/>
            <person name="Lee J.M."/>
            <person name="Toriumi M.J."/>
            <person name="Chan M.M."/>
            <person name="Tang C.C."/>
            <person name="Onodera C.S."/>
            <person name="Deng J.M."/>
            <person name="Akiyama K."/>
            <person name="Ansari Y."/>
            <person name="Arakawa T."/>
            <person name="Banh J."/>
            <person name="Banno F."/>
            <person name="Bowser L."/>
            <person name="Brooks S.Y."/>
            <person name="Carninci P."/>
            <person name="Chao Q."/>
            <person name="Choy N."/>
            <person name="Enju A."/>
            <person name="Goldsmith A.D."/>
            <person name="Gurjal M."/>
            <person name="Hansen N.F."/>
            <person name="Hayashizaki Y."/>
            <person name="Johnson-Hopson C."/>
            <person name="Hsuan V.W."/>
            <person name="Iida K."/>
            <person name="Karnes M."/>
            <person name="Khan S."/>
            <person name="Koesema E."/>
            <person name="Ishida J."/>
            <person name="Jiang P.X."/>
            <person name="Jones T."/>
            <person name="Kawai J."/>
            <person name="Kamiya A."/>
            <person name="Meyers C."/>
            <person name="Nakajima M."/>
            <person name="Narusaka M."/>
            <person name="Seki M."/>
            <person name="Sakurai T."/>
            <person name="Satou M."/>
            <person name="Tamse R."/>
            <person name="Vaysberg M."/>
            <person name="Wallender E.K."/>
            <person name="Wong C."/>
            <person name="Yamamura Y."/>
            <person name="Yuan S."/>
            <person name="Shinozaki K."/>
            <person name="Davis R.W."/>
            <person name="Theologis A."/>
            <person name="Ecker J.R."/>
        </authorList>
    </citation>
    <scope>NUCLEOTIDE SEQUENCE [LARGE SCALE MRNA]</scope>
    <source>
        <strain>cv. Columbia</strain>
    </source>
</reference>
<reference key="5">
    <citation type="journal article" date="1996" name="Plant J.">
        <title>Further progress towards a catalogue of all Arabidopsis genes: analysis of a set of 5000 non-redundant ESTs.</title>
        <authorList>
            <person name="Cooke R."/>
            <person name="Raynal M."/>
            <person name="Laudie M."/>
            <person name="Grellet F."/>
            <person name="Delseny M."/>
            <person name="Morris P.-C."/>
            <person name="Guerrier D."/>
            <person name="Giraudat J."/>
            <person name="Quigley F."/>
            <person name="Clabault G."/>
            <person name="Li Y.-F."/>
            <person name="Mache R."/>
            <person name="Krivitzky M."/>
            <person name="Gy I.J.-J."/>
            <person name="Kreis M."/>
            <person name="Lecharny A."/>
            <person name="Parmentier Y."/>
            <person name="Marbach J."/>
            <person name="Fleck J."/>
            <person name="Clement B."/>
            <person name="Philipps G."/>
            <person name="Herve C."/>
            <person name="Bardet C."/>
            <person name="Tremousaygue D."/>
            <person name="Lescure B."/>
            <person name="Lacomme C."/>
            <person name="Roby D."/>
            <person name="Jourjon M.-F."/>
            <person name="Chabrier P."/>
            <person name="Charpenteau J.-L."/>
            <person name="Desprez T."/>
            <person name="Amselem J."/>
            <person name="Chiapello H."/>
            <person name="Hoefte H."/>
        </authorList>
    </citation>
    <scope>NUCLEOTIDE SEQUENCE [LARGE SCALE MRNA] OF 141-248 AND 322-393</scope>
    <source>
        <strain>cv. Columbia</strain>
        <tissue>Seedling</tissue>
    </source>
</reference>
<reference key="6">
    <citation type="journal article" date="2004" name="Phytochemistry">
        <title>Cell-specific protein profiling in Arabidopsis thaliana trichomes: identification of trichome-located proteins involved in sulfur metabolism and detoxification.</title>
        <authorList>
            <person name="Wienkoop S."/>
            <person name="Zoeller D."/>
            <person name="Ebert B."/>
            <person name="Simon-Rosin U."/>
            <person name="Fisahn J."/>
            <person name="Glinski M."/>
            <person name="Weckwerth W."/>
        </authorList>
    </citation>
    <scope>TISSUE SPECIFICITY</scope>
    <scope>IDENTIFICATION BY MASS SPECTROMETRY</scope>
</reference>
<reference key="7">
    <citation type="journal article" date="2006" name="J. Biol. Chem.">
        <title>Differential inhibition of Arabidopsis methionine adenosyltransferases by protein S-nitrosylation.</title>
        <authorList>
            <person name="Lindermayr C."/>
            <person name="Saalbach G."/>
            <person name="Bahnweg G."/>
            <person name="Durner J."/>
        </authorList>
    </citation>
    <scope>FUNCTION</scope>
    <scope>CATALYTIC ACTIVITY</scope>
    <scope>COFACTOR</scope>
    <scope>ACTIVITY REGULATION</scope>
    <scope>PATHWAY</scope>
</reference>
<reference key="8">
    <citation type="journal article" date="2011" name="FEBS Lett.">
        <title>14-3-3 proteins fine-tune plant nutrient metabolism.</title>
        <authorList>
            <person name="Shin R."/>
            <person name="Jez J.M."/>
            <person name="Basra A."/>
            <person name="Zhang B."/>
            <person name="Schachtman D.P."/>
        </authorList>
    </citation>
    <scope>INTERACTION WITH GRF3</scope>
</reference>
<organism>
    <name type="scientific">Arabidopsis thaliana</name>
    <name type="common">Mouse-ear cress</name>
    <dbReference type="NCBI Taxonomy" id="3702"/>
    <lineage>
        <taxon>Eukaryota</taxon>
        <taxon>Viridiplantae</taxon>
        <taxon>Streptophyta</taxon>
        <taxon>Embryophyta</taxon>
        <taxon>Tracheophyta</taxon>
        <taxon>Spermatophyta</taxon>
        <taxon>Magnoliopsida</taxon>
        <taxon>eudicotyledons</taxon>
        <taxon>Gunneridae</taxon>
        <taxon>Pentapetalae</taxon>
        <taxon>rosids</taxon>
        <taxon>malvids</taxon>
        <taxon>Brassicales</taxon>
        <taxon>Brassicaceae</taxon>
        <taxon>Camelineae</taxon>
        <taxon>Arabidopsis</taxon>
    </lineage>
</organism>
<accession>P17562</accession>
<accession>Q42263</accession>
<name>METK2_ARATH</name>
<evidence type="ECO:0000250" key="1">
    <source>
        <dbReference type="UniProtKB" id="P0A817"/>
    </source>
</evidence>
<evidence type="ECO:0000250" key="2">
    <source>
        <dbReference type="UniProtKB" id="P13444"/>
    </source>
</evidence>
<evidence type="ECO:0000250" key="3">
    <source>
        <dbReference type="UniProtKB" id="Q00266"/>
    </source>
</evidence>
<evidence type="ECO:0000250" key="4">
    <source>
        <dbReference type="UniProtKB" id="Q96551"/>
    </source>
</evidence>
<evidence type="ECO:0000250" key="5">
    <source>
        <dbReference type="UniProtKB" id="Q9LUT2"/>
    </source>
</evidence>
<evidence type="ECO:0000269" key="6">
    <source>
    </source>
</evidence>
<evidence type="ECO:0000269" key="7">
    <source>
    </source>
</evidence>
<evidence type="ECO:0000269" key="8">
    <source>
    </source>
</evidence>
<evidence type="ECO:0000269" key="9">
    <source>
    </source>
</evidence>
<evidence type="ECO:0000305" key="10"/>
<evidence type="ECO:0000305" key="11">
    <source>
    </source>
</evidence>
<evidence type="ECO:0007829" key="12">
    <source>
        <dbReference type="PDB" id="6VCZ"/>
    </source>
</evidence>
<evidence type="ECO:0007829" key="13">
    <source>
        <dbReference type="PDB" id="6VD1"/>
    </source>
</evidence>
<proteinExistence type="evidence at protein level"/>
<comment type="function">
    <text evidence="7">Catalyzes the formation of S-adenosylmethionine from methionine and ATP. The reaction comprises two steps that are both catalyzed by the same enzyme: formation of S-adenosylmethionine (AdoMet) and triphosphate, and subsequent hydrolysis of the triphosphate.</text>
</comment>
<comment type="catalytic activity">
    <reaction evidence="7">
        <text>L-methionine + ATP + H2O = S-adenosyl-L-methionine + phosphate + diphosphate</text>
        <dbReference type="Rhea" id="RHEA:21080"/>
        <dbReference type="ChEBI" id="CHEBI:15377"/>
        <dbReference type="ChEBI" id="CHEBI:30616"/>
        <dbReference type="ChEBI" id="CHEBI:33019"/>
        <dbReference type="ChEBI" id="CHEBI:43474"/>
        <dbReference type="ChEBI" id="CHEBI:57844"/>
        <dbReference type="ChEBI" id="CHEBI:59789"/>
        <dbReference type="EC" id="2.5.1.6"/>
    </reaction>
</comment>
<comment type="cofactor">
    <cofactor evidence="4">
        <name>Mn(2+)</name>
        <dbReference type="ChEBI" id="CHEBI:29035"/>
    </cofactor>
    <cofactor evidence="11">
        <name>Mg(2+)</name>
        <dbReference type="ChEBI" id="CHEBI:18420"/>
    </cofactor>
    <cofactor evidence="4">
        <name>Co(2+)</name>
        <dbReference type="ChEBI" id="CHEBI:48828"/>
    </cofactor>
    <text evidence="2 4">Binds 2 divalent ions per subunit. The metal ions interact primarily with the substrate (By similarity). Can utilize magnesium, manganese or cobalt (in vitro) (By similarity).</text>
</comment>
<comment type="cofactor">
    <cofactor evidence="11">
        <name>K(+)</name>
        <dbReference type="ChEBI" id="CHEBI:29103"/>
    </cofactor>
    <text evidence="2">Binds 1 potassium ion per subunit. The potassium ion interacts primarily with the substrate (By similarity).</text>
</comment>
<comment type="activity regulation">
    <text evidence="7">Inhibited by 5,5'-dithiobis-2-nitrobenzoic acid (DTNB) and N-ethylmaleimide (NEM) (in vitro).</text>
</comment>
<comment type="pathway">
    <text evidence="7">Amino-acid biosynthesis; S-adenosyl-L-methionine biosynthesis; S-adenosyl-L-methionine from L-methionine: step 1/1.</text>
</comment>
<comment type="subunit">
    <text evidence="3 8">Homotetramer (By similarity). Interacts with GRF3.</text>
</comment>
<comment type="subcellular location">
    <subcellularLocation>
        <location evidence="5">Cytoplasm</location>
    </subcellularLocation>
</comment>
<comment type="tissue specificity">
    <text evidence="6 9">Highly expressed in stems and roots (PubMed:2482229). Detected in trichomes (at the protein level) (PubMed:15276459).</text>
</comment>
<comment type="similarity">
    <text evidence="10">Belongs to the AdoMet synthase family.</text>
</comment>
<keyword id="KW-0002">3D-structure</keyword>
<keyword id="KW-0067">ATP-binding</keyword>
<keyword id="KW-0170">Cobalt</keyword>
<keyword id="KW-0963">Cytoplasm</keyword>
<keyword id="KW-0460">Magnesium</keyword>
<keyword id="KW-0479">Metal-binding</keyword>
<keyword id="KW-0547">Nucleotide-binding</keyword>
<keyword id="KW-0554">One-carbon metabolism</keyword>
<keyword id="KW-0630">Potassium</keyword>
<keyword id="KW-1185">Reference proteome</keyword>
<keyword id="KW-0808">Transferase</keyword>
<feature type="chain" id="PRO_0000174457" description="S-adenosylmethionine synthase 2">
    <location>
        <begin position="1"/>
        <end position="393"/>
    </location>
</feature>
<feature type="binding site" evidence="2">
    <location>
        <position position="9"/>
    </location>
    <ligand>
        <name>Mg(2+)</name>
        <dbReference type="ChEBI" id="CHEBI:18420"/>
    </ligand>
</feature>
<feature type="binding site" description="in other chain" evidence="3">
    <location>
        <position position="15"/>
    </location>
    <ligand>
        <name>ATP</name>
        <dbReference type="ChEBI" id="CHEBI:30616"/>
        <note>ligand shared between two neighboring subunits</note>
    </ligand>
</feature>
<feature type="binding site" evidence="1">
    <location>
        <position position="43"/>
    </location>
    <ligand>
        <name>K(+)</name>
        <dbReference type="ChEBI" id="CHEBI:29103"/>
    </ligand>
</feature>
<feature type="binding site" description="in other chain" evidence="1">
    <location>
        <position position="56"/>
    </location>
    <ligand>
        <name>L-methionine</name>
        <dbReference type="ChEBI" id="CHEBI:57844"/>
        <note>ligand shared between two neighboring subunits</note>
    </ligand>
</feature>
<feature type="binding site" description="in other chain" evidence="1">
    <location>
        <position position="99"/>
    </location>
    <ligand>
        <name>L-methionine</name>
        <dbReference type="ChEBI" id="CHEBI:57844"/>
        <note>ligand shared between two neighboring subunits</note>
    </ligand>
</feature>
<feature type="binding site" description="in other chain" evidence="3">
    <location>
        <begin position="167"/>
        <end position="169"/>
    </location>
    <ligand>
        <name>ATP</name>
        <dbReference type="ChEBI" id="CHEBI:30616"/>
        <note>ligand shared between two neighboring subunits</note>
    </ligand>
</feature>
<feature type="binding site" description="in other chain" evidence="3">
    <location>
        <begin position="235"/>
        <end position="238"/>
    </location>
    <ligand>
        <name>ATP</name>
        <dbReference type="ChEBI" id="CHEBI:30616"/>
        <note>ligand shared between two neighboring subunits</note>
    </ligand>
</feature>
<feature type="binding site" description="in other chain" evidence="3">
    <location>
        <position position="246"/>
    </location>
    <ligand>
        <name>ATP</name>
        <dbReference type="ChEBI" id="CHEBI:30616"/>
        <note>ligand shared between two neighboring subunits</note>
    </ligand>
</feature>
<feature type="binding site" evidence="1">
    <location>
        <position position="246"/>
    </location>
    <ligand>
        <name>L-methionine</name>
        <dbReference type="ChEBI" id="CHEBI:57844"/>
        <note>ligand shared between two neighboring subunits</note>
    </ligand>
</feature>
<feature type="binding site" description="in other chain" evidence="1">
    <location>
        <begin position="252"/>
        <end position="253"/>
    </location>
    <ligand>
        <name>ATP</name>
        <dbReference type="ChEBI" id="CHEBI:30616"/>
        <note>ligand shared between two neighboring subunits</note>
    </ligand>
</feature>
<feature type="binding site" evidence="1">
    <location>
        <position position="269"/>
    </location>
    <ligand>
        <name>ATP</name>
        <dbReference type="ChEBI" id="CHEBI:30616"/>
        <note>ligand shared between two neighboring subunits</note>
    </ligand>
</feature>
<feature type="binding site" evidence="1">
    <location>
        <position position="273"/>
    </location>
    <ligand>
        <name>ATP</name>
        <dbReference type="ChEBI" id="CHEBI:30616"/>
        <note>ligand shared between two neighboring subunits</note>
    </ligand>
</feature>
<feature type="binding site" evidence="2">
    <location>
        <position position="277"/>
    </location>
    <ligand>
        <name>ATP</name>
        <dbReference type="ChEBI" id="CHEBI:30616"/>
        <note>ligand shared between two neighboring subunits</note>
    </ligand>
</feature>
<feature type="binding site" description="in other chain" evidence="1">
    <location>
        <position position="277"/>
    </location>
    <ligand>
        <name>L-methionine</name>
        <dbReference type="ChEBI" id="CHEBI:57844"/>
        <note>ligand shared between two neighboring subunits</note>
    </ligand>
</feature>
<feature type="strand" evidence="13">
    <location>
        <begin position="4"/>
        <end position="11"/>
    </location>
</feature>
<feature type="helix" evidence="13">
    <location>
        <begin position="16"/>
        <end position="34"/>
    </location>
</feature>
<feature type="strand" evidence="13">
    <location>
        <begin position="39"/>
        <end position="47"/>
    </location>
</feature>
<feature type="strand" evidence="13">
    <location>
        <begin position="50"/>
        <end position="58"/>
    </location>
</feature>
<feature type="helix" evidence="13">
    <location>
        <begin position="65"/>
        <end position="76"/>
    </location>
</feature>
<feature type="helix" evidence="13">
    <location>
        <begin position="81"/>
        <end position="83"/>
    </location>
</feature>
<feature type="turn" evidence="13">
    <location>
        <begin position="87"/>
        <end position="89"/>
    </location>
</feature>
<feature type="strand" evidence="13">
    <location>
        <begin position="90"/>
        <end position="97"/>
    </location>
</feature>
<feature type="helix" evidence="13">
    <location>
        <begin position="101"/>
        <end position="108"/>
    </location>
</feature>
<feature type="turn" evidence="13">
    <location>
        <begin position="109"/>
        <end position="112"/>
    </location>
</feature>
<feature type="helix" evidence="13">
    <location>
        <begin position="115"/>
        <end position="117"/>
    </location>
</feature>
<feature type="strand" evidence="13">
    <location>
        <begin position="120"/>
        <end position="122"/>
    </location>
</feature>
<feature type="strand" evidence="13">
    <location>
        <begin position="124"/>
        <end position="131"/>
    </location>
</feature>
<feature type="helix" evidence="13">
    <location>
        <begin position="140"/>
        <end position="157"/>
    </location>
</feature>
<feature type="turn" evidence="12">
    <location>
        <begin position="160"/>
        <end position="163"/>
    </location>
</feature>
<feature type="strand" evidence="13">
    <location>
        <begin position="164"/>
        <end position="179"/>
    </location>
</feature>
<feature type="strand" evidence="13">
    <location>
        <begin position="182"/>
        <end position="197"/>
    </location>
</feature>
<feature type="helix" evidence="13">
    <location>
        <begin position="203"/>
        <end position="213"/>
    </location>
</feature>
<feature type="turn" evidence="13">
    <location>
        <begin position="214"/>
        <end position="218"/>
    </location>
</feature>
<feature type="helix" evidence="13">
    <location>
        <begin position="221"/>
        <end position="223"/>
    </location>
</feature>
<feature type="strand" evidence="13">
    <location>
        <begin position="229"/>
        <end position="233"/>
    </location>
</feature>
<feature type="helix" evidence="13">
    <location>
        <begin position="242"/>
        <end position="245"/>
    </location>
</feature>
<feature type="strand" evidence="12">
    <location>
        <begin position="246"/>
        <end position="249"/>
    </location>
</feature>
<feature type="turn" evidence="13">
    <location>
        <begin position="254"/>
        <end position="261"/>
    </location>
</feature>
<feature type="helix" evidence="13">
    <location>
        <begin position="278"/>
        <end position="295"/>
    </location>
</feature>
<feature type="strand" evidence="13">
    <location>
        <begin position="300"/>
        <end position="308"/>
    </location>
</feature>
<feature type="strand" evidence="13">
    <location>
        <begin position="316"/>
        <end position="321"/>
    </location>
</feature>
<feature type="helix" evidence="13">
    <location>
        <begin position="330"/>
        <end position="340"/>
    </location>
</feature>
<feature type="helix" evidence="13">
    <location>
        <begin position="345"/>
        <end position="351"/>
    </location>
</feature>
<feature type="turn" evidence="13">
    <location>
        <begin position="352"/>
        <end position="355"/>
    </location>
</feature>
<feature type="turn" evidence="13">
    <location>
        <begin position="359"/>
        <end position="362"/>
    </location>
</feature>
<feature type="helix" evidence="13">
    <location>
        <begin position="363"/>
        <end position="366"/>
    </location>
</feature>
<feature type="strand" evidence="13">
    <location>
        <begin position="370"/>
        <end position="372"/>
    </location>
</feature>
<feature type="helix" evidence="13">
    <location>
        <begin position="379"/>
        <end position="381"/>
    </location>
</feature>
<dbReference type="EC" id="2.5.1.6" evidence="7"/>
<dbReference type="EMBL" id="M33217">
    <property type="protein sequence ID" value="AAA32869.1"/>
    <property type="molecule type" value="Genomic_DNA"/>
</dbReference>
<dbReference type="EMBL" id="AC007138">
    <property type="protein sequence ID" value="AAD22647.1"/>
    <property type="molecule type" value="Genomic_DNA"/>
</dbReference>
<dbReference type="EMBL" id="AL161493">
    <property type="protein sequence ID" value="CAB80678.1"/>
    <property type="molecule type" value="Genomic_DNA"/>
</dbReference>
<dbReference type="EMBL" id="CP002687">
    <property type="protein sequence ID" value="AEE82084.1"/>
    <property type="molecule type" value="Genomic_DNA"/>
</dbReference>
<dbReference type="EMBL" id="CP002687">
    <property type="protein sequence ID" value="AEE82085.1"/>
    <property type="molecule type" value="Genomic_DNA"/>
</dbReference>
<dbReference type="EMBL" id="AY072327">
    <property type="protein sequence ID" value="AAL61934.1"/>
    <property type="molecule type" value="mRNA"/>
</dbReference>
<dbReference type="EMBL" id="AY094454">
    <property type="protein sequence ID" value="AAM19825.1"/>
    <property type="molecule type" value="mRNA"/>
</dbReference>
<dbReference type="EMBL" id="BT000575">
    <property type="protein sequence ID" value="AAN18144.1"/>
    <property type="molecule type" value="mRNA"/>
</dbReference>
<dbReference type="EMBL" id="Z33778">
    <property type="protein sequence ID" value="CAA83930.1"/>
    <property type="molecule type" value="mRNA"/>
</dbReference>
<dbReference type="EMBL" id="Z29136">
    <property type="protein sequence ID" value="CAA82393.1"/>
    <property type="molecule type" value="mRNA"/>
</dbReference>
<dbReference type="PIR" id="JQ0410">
    <property type="entry name" value="JQ0410"/>
</dbReference>
<dbReference type="PDB" id="6VCZ">
    <property type="method" value="X-ray"/>
    <property type="resolution" value="1.52 A"/>
    <property type="chains" value="A/B=1-392"/>
</dbReference>
<dbReference type="PDB" id="6VD0">
    <property type="method" value="X-ray"/>
    <property type="resolution" value="2.00 A"/>
    <property type="chains" value="A/B/C/D=1-392"/>
</dbReference>
<dbReference type="PDB" id="6VD1">
    <property type="method" value="X-ray"/>
    <property type="resolution" value="1.32 A"/>
    <property type="chains" value="A/B=1-392"/>
</dbReference>
<dbReference type="PDB" id="6VD2">
    <property type="method" value="X-ray"/>
    <property type="resolution" value="1.97 A"/>
    <property type="chains" value="A/B=1-392"/>
</dbReference>
<dbReference type="PDBsum" id="6VCZ"/>
<dbReference type="PDBsum" id="6VD0"/>
<dbReference type="PDBsum" id="6VD1"/>
<dbReference type="PDBsum" id="6VD2"/>
<dbReference type="SMR" id="P17562"/>
<dbReference type="BioGRID" id="12284">
    <property type="interactions" value="7"/>
</dbReference>
<dbReference type="FunCoup" id="P17562">
    <property type="interactions" value="2583"/>
</dbReference>
<dbReference type="STRING" id="3702.P17562"/>
<dbReference type="iPTMnet" id="P17562"/>
<dbReference type="PaxDb" id="3702-AT4G01850.1"/>
<dbReference type="ProteomicsDB" id="250626"/>
<dbReference type="EnsemblPlants" id="AT4G01850.1">
    <property type="protein sequence ID" value="AT4G01850.1"/>
    <property type="gene ID" value="AT4G01850"/>
</dbReference>
<dbReference type="EnsemblPlants" id="AT4G01850.2">
    <property type="protein sequence ID" value="AT4G01850.2"/>
    <property type="gene ID" value="AT4G01850"/>
</dbReference>
<dbReference type="GeneID" id="826987"/>
<dbReference type="Gramene" id="AT4G01850.1">
    <property type="protein sequence ID" value="AT4G01850.1"/>
    <property type="gene ID" value="AT4G01850"/>
</dbReference>
<dbReference type="Gramene" id="AT4G01850.2">
    <property type="protein sequence ID" value="AT4G01850.2"/>
    <property type="gene ID" value="AT4G01850"/>
</dbReference>
<dbReference type="KEGG" id="ath:AT4G01850"/>
<dbReference type="Araport" id="AT4G01850"/>
<dbReference type="TAIR" id="AT4G01850">
    <property type="gene designation" value="SAM-2"/>
</dbReference>
<dbReference type="eggNOG" id="KOG1506">
    <property type="taxonomic scope" value="Eukaryota"/>
</dbReference>
<dbReference type="HOGENOM" id="CLU_041802_0_1_1"/>
<dbReference type="InParanoid" id="P17562"/>
<dbReference type="OMA" id="WILPDCK"/>
<dbReference type="PhylomeDB" id="P17562"/>
<dbReference type="BioCyc" id="ARA:AT4G01850-MONOMER"/>
<dbReference type="UniPathway" id="UPA00315">
    <property type="reaction ID" value="UER00080"/>
</dbReference>
<dbReference type="CD-CODE" id="4299E36E">
    <property type="entry name" value="Nucleolus"/>
</dbReference>
<dbReference type="PRO" id="PR:P17562"/>
<dbReference type="Proteomes" id="UP000006548">
    <property type="component" value="Chromosome 4"/>
</dbReference>
<dbReference type="ExpressionAtlas" id="P17562">
    <property type="expression patterns" value="baseline and differential"/>
</dbReference>
<dbReference type="GO" id="GO:0005829">
    <property type="term" value="C:cytosol"/>
    <property type="evidence" value="ECO:0000314"/>
    <property type="project" value="TAIR"/>
</dbReference>
<dbReference type="GO" id="GO:0070062">
    <property type="term" value="C:extracellular exosome"/>
    <property type="evidence" value="ECO:0000314"/>
    <property type="project" value="TAIR"/>
</dbReference>
<dbReference type="GO" id="GO:0005730">
    <property type="term" value="C:nucleolus"/>
    <property type="evidence" value="ECO:0007005"/>
    <property type="project" value="TAIR"/>
</dbReference>
<dbReference type="GO" id="GO:0009505">
    <property type="term" value="C:plant-type cell wall"/>
    <property type="evidence" value="ECO:0007005"/>
    <property type="project" value="TAIR"/>
</dbReference>
<dbReference type="GO" id="GO:0009506">
    <property type="term" value="C:plasmodesma"/>
    <property type="evidence" value="ECO:0007005"/>
    <property type="project" value="TAIR"/>
</dbReference>
<dbReference type="GO" id="GO:0005524">
    <property type="term" value="F:ATP binding"/>
    <property type="evidence" value="ECO:0007669"/>
    <property type="project" value="UniProtKB-KW"/>
</dbReference>
<dbReference type="GO" id="GO:0005507">
    <property type="term" value="F:copper ion binding"/>
    <property type="evidence" value="ECO:0007005"/>
    <property type="project" value="TAIR"/>
</dbReference>
<dbReference type="GO" id="GO:0004478">
    <property type="term" value="F:methionine adenosyltransferase activity"/>
    <property type="evidence" value="ECO:0007669"/>
    <property type="project" value="UniProtKB-EC"/>
</dbReference>
<dbReference type="GO" id="GO:0006730">
    <property type="term" value="P:one-carbon metabolic process"/>
    <property type="evidence" value="ECO:0007669"/>
    <property type="project" value="UniProtKB-KW"/>
</dbReference>
<dbReference type="GO" id="GO:0006556">
    <property type="term" value="P:S-adenosylmethionine biosynthetic process"/>
    <property type="evidence" value="ECO:0007669"/>
    <property type="project" value="UniProtKB-UniPathway"/>
</dbReference>
<dbReference type="CDD" id="cd18079">
    <property type="entry name" value="S-AdoMet_synt"/>
    <property type="match status" value="1"/>
</dbReference>
<dbReference type="FunFam" id="3.30.300.10:FF:000003">
    <property type="entry name" value="S-adenosylmethionine synthase"/>
    <property type="match status" value="1"/>
</dbReference>
<dbReference type="FunFam" id="3.30.300.10:FF:000004">
    <property type="entry name" value="S-adenosylmethionine synthase"/>
    <property type="match status" value="1"/>
</dbReference>
<dbReference type="FunFam" id="3.30.300.10:FF:000011">
    <property type="entry name" value="S-adenosylmethionine synthase"/>
    <property type="match status" value="1"/>
</dbReference>
<dbReference type="FunFam" id="3.30.300.10:FF:000021">
    <property type="entry name" value="S-adenosylmethionine synthetase 1"/>
    <property type="match status" value="1"/>
</dbReference>
<dbReference type="Gene3D" id="3.30.300.10">
    <property type="match status" value="3"/>
</dbReference>
<dbReference type="HAMAP" id="MF_00086">
    <property type="entry name" value="S_AdoMet_synth1"/>
    <property type="match status" value="1"/>
</dbReference>
<dbReference type="InterPro" id="IPR022631">
    <property type="entry name" value="ADOMET_SYNTHASE_CS"/>
</dbReference>
<dbReference type="InterPro" id="IPR022630">
    <property type="entry name" value="S-AdoMet_synt_C"/>
</dbReference>
<dbReference type="InterPro" id="IPR022629">
    <property type="entry name" value="S-AdoMet_synt_central"/>
</dbReference>
<dbReference type="InterPro" id="IPR022628">
    <property type="entry name" value="S-AdoMet_synt_N"/>
</dbReference>
<dbReference type="InterPro" id="IPR002133">
    <property type="entry name" value="S-AdoMet_synthetase"/>
</dbReference>
<dbReference type="InterPro" id="IPR022636">
    <property type="entry name" value="S-AdoMet_synthetase_sfam"/>
</dbReference>
<dbReference type="NCBIfam" id="TIGR01034">
    <property type="entry name" value="metK"/>
    <property type="match status" value="1"/>
</dbReference>
<dbReference type="PANTHER" id="PTHR11964">
    <property type="entry name" value="S-ADENOSYLMETHIONINE SYNTHETASE"/>
    <property type="match status" value="1"/>
</dbReference>
<dbReference type="Pfam" id="PF02773">
    <property type="entry name" value="S-AdoMet_synt_C"/>
    <property type="match status" value="1"/>
</dbReference>
<dbReference type="Pfam" id="PF02772">
    <property type="entry name" value="S-AdoMet_synt_M"/>
    <property type="match status" value="1"/>
</dbReference>
<dbReference type="Pfam" id="PF00438">
    <property type="entry name" value="S-AdoMet_synt_N"/>
    <property type="match status" value="1"/>
</dbReference>
<dbReference type="PIRSF" id="PIRSF000497">
    <property type="entry name" value="MAT"/>
    <property type="match status" value="1"/>
</dbReference>
<dbReference type="SUPFAM" id="SSF55973">
    <property type="entry name" value="S-adenosylmethionine synthetase"/>
    <property type="match status" value="3"/>
</dbReference>
<dbReference type="PROSITE" id="PS00376">
    <property type="entry name" value="ADOMET_SYNTHASE_1"/>
    <property type="match status" value="1"/>
</dbReference>
<dbReference type="PROSITE" id="PS00377">
    <property type="entry name" value="ADOMET_SYNTHASE_2"/>
    <property type="match status" value="1"/>
</dbReference>
<sequence>METFLFTSESVNEGHPDKLCDQISDAVLDACLEQDPDSKVACETCTKTNMVMVFGEITTKATIDYEKIVRDTCRSIGFISDDVGLDADKCKVLVNIEQQSPDIAQGVHGHFTKRPEDIGAGDQGHMFGYATDETPELMPLSHVLATKIGARLTEVRKNGTCRWLRPDGKTQVTVEYYNDNGAMVPVRVHTVLISTQHDETVTNDEIARDLKEHVIKPIIPEKYLDDKTIFHLNPSGRFVIGGPHGDAGLTGRKIIIDTYGGWGAHGGGAFSGKDPTKVDRSGAYIVRQAAKSVVANGMARRALVQVSYAIGVPEPLSVFVDTYGTGLIPDKEILKIVKETFDFRPGMMTINLDLKRGGNGRFQKTAAYGHFGRDDPDFTWEVVKPLKWDKPQA</sequence>